<sequence length="138" mass="16460">MLRGINHICFSVSNLENSIMFYEKVLEGELLVKGRKLAYFNICGVWIALNEETHIPRNEVHQSYTHIAFSVEQEDFKCLIQRLEENDVHILQGRERDVRDCESIYFVDPDGHKFEFHSGTLQDRLNYYRDEKPHMTFY</sequence>
<proteinExistence type="inferred from homology"/>
<keyword id="KW-0046">Antibiotic resistance</keyword>
<keyword id="KW-0963">Cytoplasm</keyword>
<keyword id="KW-0460">Magnesium</keyword>
<keyword id="KW-0479">Metal-binding</keyword>
<keyword id="KW-1185">Reference proteome</keyword>
<keyword id="KW-0808">Transferase</keyword>
<name>FOSB_BACCR</name>
<dbReference type="EC" id="2.5.1.-" evidence="1"/>
<dbReference type="EMBL" id="AE016877">
    <property type="protein sequence ID" value="AAP08996.1"/>
    <property type="molecule type" value="Genomic_DNA"/>
</dbReference>
<dbReference type="RefSeq" id="NP_831795.1">
    <property type="nucleotide sequence ID" value="NC_004722.1"/>
</dbReference>
<dbReference type="RefSeq" id="WP_000943772.1">
    <property type="nucleotide sequence ID" value="NZ_CP138336.1"/>
</dbReference>
<dbReference type="SMR" id="Q81EF2"/>
<dbReference type="STRING" id="226900.BC_2027"/>
<dbReference type="CARD" id="ARO:3000172">
    <property type="molecule name" value="FosB"/>
    <property type="mechanism identifier" value="ARO:0001004"/>
    <property type="mechanism name" value="antibiotic inactivation"/>
</dbReference>
<dbReference type="KEGG" id="bce:BC2027"/>
<dbReference type="PATRIC" id="fig|226900.8.peg.2036"/>
<dbReference type="HOGENOM" id="CLU_121356_0_0_9"/>
<dbReference type="OrthoDB" id="192739at2"/>
<dbReference type="Proteomes" id="UP000001417">
    <property type="component" value="Chromosome"/>
</dbReference>
<dbReference type="GO" id="GO:0005737">
    <property type="term" value="C:cytoplasm"/>
    <property type="evidence" value="ECO:0007669"/>
    <property type="project" value="UniProtKB-SubCell"/>
</dbReference>
<dbReference type="GO" id="GO:0000287">
    <property type="term" value="F:magnesium ion binding"/>
    <property type="evidence" value="ECO:0007669"/>
    <property type="project" value="UniProtKB-UniRule"/>
</dbReference>
<dbReference type="GO" id="GO:0016765">
    <property type="term" value="F:transferase activity, transferring alkyl or aryl (other than methyl) groups"/>
    <property type="evidence" value="ECO:0007669"/>
    <property type="project" value="UniProtKB-UniRule"/>
</dbReference>
<dbReference type="GO" id="GO:0046677">
    <property type="term" value="P:response to antibiotic"/>
    <property type="evidence" value="ECO:0007669"/>
    <property type="project" value="UniProtKB-UniRule"/>
</dbReference>
<dbReference type="FunFam" id="3.10.180.10:FF:000015">
    <property type="entry name" value="Metallothiol transferase FosB"/>
    <property type="match status" value="1"/>
</dbReference>
<dbReference type="Gene3D" id="3.10.180.10">
    <property type="entry name" value="2,3-Dihydroxybiphenyl 1,2-Dioxygenase, domain 1"/>
    <property type="match status" value="1"/>
</dbReference>
<dbReference type="HAMAP" id="MF_01512">
    <property type="entry name" value="FosB"/>
    <property type="match status" value="1"/>
</dbReference>
<dbReference type="InterPro" id="IPR051332">
    <property type="entry name" value="Fosfomycin_Res_Enzymes"/>
</dbReference>
<dbReference type="InterPro" id="IPR029068">
    <property type="entry name" value="Glyas_Bleomycin-R_OHBP_Dase"/>
</dbReference>
<dbReference type="InterPro" id="IPR004360">
    <property type="entry name" value="Glyas_Fos-R_dOase_dom"/>
</dbReference>
<dbReference type="InterPro" id="IPR022858">
    <property type="entry name" value="Metallothiol_Trafse_FosB"/>
</dbReference>
<dbReference type="InterPro" id="IPR037523">
    <property type="entry name" value="VOC"/>
</dbReference>
<dbReference type="NCBIfam" id="NF000493">
    <property type="entry name" value="Fos_BSH"/>
    <property type="match status" value="1"/>
</dbReference>
<dbReference type="NCBIfam" id="NF041541">
    <property type="entry name" value="fosBx1_fam"/>
    <property type="match status" value="1"/>
</dbReference>
<dbReference type="NCBIfam" id="NF003152">
    <property type="entry name" value="PRK04101.1"/>
    <property type="match status" value="1"/>
</dbReference>
<dbReference type="PANTHER" id="PTHR36113:SF6">
    <property type="entry name" value="FOSFOMYCIN RESISTANCE PROTEIN FOSX"/>
    <property type="match status" value="1"/>
</dbReference>
<dbReference type="PANTHER" id="PTHR36113">
    <property type="entry name" value="LYASE, PUTATIVE-RELATED-RELATED"/>
    <property type="match status" value="1"/>
</dbReference>
<dbReference type="Pfam" id="PF00903">
    <property type="entry name" value="Glyoxalase"/>
    <property type="match status" value="1"/>
</dbReference>
<dbReference type="SUPFAM" id="SSF54593">
    <property type="entry name" value="Glyoxalase/Bleomycin resistance protein/Dihydroxybiphenyl dioxygenase"/>
    <property type="match status" value="1"/>
</dbReference>
<dbReference type="PROSITE" id="PS51819">
    <property type="entry name" value="VOC"/>
    <property type="match status" value="1"/>
</dbReference>
<feature type="chain" id="PRO_0000164026" description="Metallothiol transferase FosB">
    <location>
        <begin position="1"/>
        <end position="138"/>
    </location>
</feature>
<feature type="domain" description="VOC" evidence="2">
    <location>
        <begin position="4"/>
        <end position="119"/>
    </location>
</feature>
<feature type="active site" description="Proton donor/acceptor" evidence="2">
    <location>
        <position position="115"/>
    </location>
</feature>
<feature type="binding site" evidence="1">
    <location>
        <position position="7"/>
    </location>
    <ligand>
        <name>Mg(2+)</name>
        <dbReference type="ChEBI" id="CHEBI:18420"/>
    </ligand>
</feature>
<feature type="binding site" evidence="1">
    <location>
        <position position="66"/>
    </location>
    <ligand>
        <name>Mg(2+)</name>
        <dbReference type="ChEBI" id="CHEBI:18420"/>
    </ligand>
</feature>
<feature type="binding site" evidence="1">
    <location>
        <position position="115"/>
    </location>
    <ligand>
        <name>Mg(2+)</name>
        <dbReference type="ChEBI" id="CHEBI:18420"/>
    </ligand>
</feature>
<evidence type="ECO:0000255" key="1">
    <source>
        <dbReference type="HAMAP-Rule" id="MF_01512"/>
    </source>
</evidence>
<evidence type="ECO:0000255" key="2">
    <source>
        <dbReference type="PROSITE-ProRule" id="PRU01163"/>
    </source>
</evidence>
<gene>
    <name evidence="1" type="primary">fosB</name>
    <name type="ordered locus">BC_2027</name>
</gene>
<organism>
    <name type="scientific">Bacillus cereus (strain ATCC 14579 / DSM 31 / CCUG 7414 / JCM 2152 / NBRC 15305 / NCIMB 9373 / NCTC 2599 / NRRL B-3711)</name>
    <dbReference type="NCBI Taxonomy" id="226900"/>
    <lineage>
        <taxon>Bacteria</taxon>
        <taxon>Bacillati</taxon>
        <taxon>Bacillota</taxon>
        <taxon>Bacilli</taxon>
        <taxon>Bacillales</taxon>
        <taxon>Bacillaceae</taxon>
        <taxon>Bacillus</taxon>
        <taxon>Bacillus cereus group</taxon>
    </lineage>
</organism>
<protein>
    <recommendedName>
        <fullName evidence="1">Metallothiol transferase FosB</fullName>
        <ecNumber evidence="1">2.5.1.-</ecNumber>
    </recommendedName>
    <alternativeName>
        <fullName evidence="1">Fosfomycin resistance protein</fullName>
    </alternativeName>
</protein>
<reference key="1">
    <citation type="journal article" date="2003" name="Nature">
        <title>Genome sequence of Bacillus cereus and comparative analysis with Bacillus anthracis.</title>
        <authorList>
            <person name="Ivanova N."/>
            <person name="Sorokin A."/>
            <person name="Anderson I."/>
            <person name="Galleron N."/>
            <person name="Candelon B."/>
            <person name="Kapatral V."/>
            <person name="Bhattacharyya A."/>
            <person name="Reznik G."/>
            <person name="Mikhailova N."/>
            <person name="Lapidus A."/>
            <person name="Chu L."/>
            <person name="Mazur M."/>
            <person name="Goltsman E."/>
            <person name="Larsen N."/>
            <person name="D'Souza M."/>
            <person name="Walunas T."/>
            <person name="Grechkin Y."/>
            <person name="Pusch G."/>
            <person name="Haselkorn R."/>
            <person name="Fonstein M."/>
            <person name="Ehrlich S.D."/>
            <person name="Overbeek R."/>
            <person name="Kyrpides N.C."/>
        </authorList>
    </citation>
    <scope>NUCLEOTIDE SEQUENCE [LARGE SCALE GENOMIC DNA]</scope>
    <source>
        <strain>ATCC 14579 / DSM 31 / CCUG 7414 / JCM 2152 / NBRC 15305 / NCIMB 9373 / NCTC 2599 / NRRL B-3711</strain>
    </source>
</reference>
<accession>Q81EF2</accession>
<comment type="function">
    <text evidence="1">Metallothiol transferase which confers resistance to fosfomycin by catalyzing the addition of a thiol cofactor to fosfomycin. L-cysteine is probably the physiological thiol donor.</text>
</comment>
<comment type="cofactor">
    <cofactor evidence="1">
        <name>Mg(2+)</name>
        <dbReference type="ChEBI" id="CHEBI:18420"/>
    </cofactor>
</comment>
<comment type="subunit">
    <text evidence="1">Homodimer.</text>
</comment>
<comment type="subcellular location">
    <subcellularLocation>
        <location evidence="1">Cytoplasm</location>
    </subcellularLocation>
</comment>
<comment type="similarity">
    <text evidence="1">Belongs to the fosfomycin resistance protein family. FosB subfamily.</text>
</comment>